<gene>
    <name type="primary">alr</name>
    <name type="synonym">dal</name>
    <name type="ordered locus">LL0844</name>
    <name type="ORF">L0103</name>
</gene>
<name>ALR_LACLA</name>
<protein>
    <recommendedName>
        <fullName evidence="1">Alanine racemase</fullName>
        <ecNumber evidence="1">5.1.1.1</ecNumber>
    </recommendedName>
</protein>
<comment type="function">
    <text evidence="1">Catalyzes the interconversion of L-alanine and D-alanine. May also act on other amino acids.</text>
</comment>
<comment type="catalytic activity">
    <reaction evidence="1">
        <text>L-alanine = D-alanine</text>
        <dbReference type="Rhea" id="RHEA:20249"/>
        <dbReference type="ChEBI" id="CHEBI:57416"/>
        <dbReference type="ChEBI" id="CHEBI:57972"/>
        <dbReference type="EC" id="5.1.1.1"/>
    </reaction>
</comment>
<comment type="cofactor">
    <cofactor evidence="1">
        <name>pyridoxal 5'-phosphate</name>
        <dbReference type="ChEBI" id="CHEBI:597326"/>
    </cofactor>
</comment>
<comment type="pathway">
    <text evidence="1">Amino-acid biosynthesis; D-alanine biosynthesis; D-alanine from L-alanine: step 1/1.</text>
</comment>
<comment type="similarity">
    <text evidence="1">Belongs to the alanine racemase family.</text>
</comment>
<proteinExistence type="inferred from homology"/>
<dbReference type="EC" id="5.1.1.1" evidence="1"/>
<dbReference type="EMBL" id="AE005176">
    <property type="protein sequence ID" value="AAK04942.1"/>
    <property type="molecule type" value="Genomic_DNA"/>
</dbReference>
<dbReference type="PIR" id="D86730">
    <property type="entry name" value="D86730"/>
</dbReference>
<dbReference type="RefSeq" id="NP_267000.1">
    <property type="nucleotide sequence ID" value="NC_002662.1"/>
</dbReference>
<dbReference type="RefSeq" id="WP_003132601.1">
    <property type="nucleotide sequence ID" value="NC_002662.1"/>
</dbReference>
<dbReference type="SMR" id="Q9CH94"/>
<dbReference type="PaxDb" id="272623-L0103"/>
<dbReference type="EnsemblBacteria" id="AAK04942">
    <property type="protein sequence ID" value="AAK04942"/>
    <property type="gene ID" value="L0103"/>
</dbReference>
<dbReference type="KEGG" id="lla:L0103"/>
<dbReference type="PATRIC" id="fig|272623.7.peg.903"/>
<dbReference type="eggNOG" id="COG0787">
    <property type="taxonomic scope" value="Bacteria"/>
</dbReference>
<dbReference type="HOGENOM" id="CLU_028393_2_1_9"/>
<dbReference type="OrthoDB" id="9813814at2"/>
<dbReference type="UniPathway" id="UPA00042">
    <property type="reaction ID" value="UER00497"/>
</dbReference>
<dbReference type="Proteomes" id="UP000002196">
    <property type="component" value="Chromosome"/>
</dbReference>
<dbReference type="GO" id="GO:0005829">
    <property type="term" value="C:cytosol"/>
    <property type="evidence" value="ECO:0007669"/>
    <property type="project" value="TreeGrafter"/>
</dbReference>
<dbReference type="GO" id="GO:0008784">
    <property type="term" value="F:alanine racemase activity"/>
    <property type="evidence" value="ECO:0007669"/>
    <property type="project" value="UniProtKB-UniRule"/>
</dbReference>
<dbReference type="GO" id="GO:0030170">
    <property type="term" value="F:pyridoxal phosphate binding"/>
    <property type="evidence" value="ECO:0007669"/>
    <property type="project" value="UniProtKB-UniRule"/>
</dbReference>
<dbReference type="GO" id="GO:0030632">
    <property type="term" value="P:D-alanine biosynthetic process"/>
    <property type="evidence" value="ECO:0007669"/>
    <property type="project" value="UniProtKB-UniRule"/>
</dbReference>
<dbReference type="GO" id="GO:0009252">
    <property type="term" value="P:peptidoglycan biosynthetic process"/>
    <property type="evidence" value="ECO:0007669"/>
    <property type="project" value="TreeGrafter"/>
</dbReference>
<dbReference type="CDD" id="cd00430">
    <property type="entry name" value="PLPDE_III_AR"/>
    <property type="match status" value="1"/>
</dbReference>
<dbReference type="FunFam" id="2.40.37.10:FF:000006">
    <property type="entry name" value="Alanine racemase"/>
    <property type="match status" value="1"/>
</dbReference>
<dbReference type="FunFam" id="3.20.20.10:FF:000002">
    <property type="entry name" value="Alanine racemase"/>
    <property type="match status" value="1"/>
</dbReference>
<dbReference type="Gene3D" id="3.20.20.10">
    <property type="entry name" value="Alanine racemase"/>
    <property type="match status" value="1"/>
</dbReference>
<dbReference type="Gene3D" id="2.40.37.10">
    <property type="entry name" value="Lyase, Ornithine Decarboxylase, Chain A, domain 1"/>
    <property type="match status" value="1"/>
</dbReference>
<dbReference type="HAMAP" id="MF_01201">
    <property type="entry name" value="Ala_racemase"/>
    <property type="match status" value="1"/>
</dbReference>
<dbReference type="InterPro" id="IPR000821">
    <property type="entry name" value="Ala_racemase"/>
</dbReference>
<dbReference type="InterPro" id="IPR009006">
    <property type="entry name" value="Ala_racemase/Decarboxylase_C"/>
</dbReference>
<dbReference type="InterPro" id="IPR011079">
    <property type="entry name" value="Ala_racemase_C"/>
</dbReference>
<dbReference type="InterPro" id="IPR001608">
    <property type="entry name" value="Ala_racemase_N"/>
</dbReference>
<dbReference type="InterPro" id="IPR020622">
    <property type="entry name" value="Ala_racemase_pyridoxalP-BS"/>
</dbReference>
<dbReference type="InterPro" id="IPR029066">
    <property type="entry name" value="PLP-binding_barrel"/>
</dbReference>
<dbReference type="NCBIfam" id="TIGR00492">
    <property type="entry name" value="alr"/>
    <property type="match status" value="1"/>
</dbReference>
<dbReference type="PANTHER" id="PTHR30511">
    <property type="entry name" value="ALANINE RACEMASE"/>
    <property type="match status" value="1"/>
</dbReference>
<dbReference type="PANTHER" id="PTHR30511:SF0">
    <property type="entry name" value="ALANINE RACEMASE, CATABOLIC-RELATED"/>
    <property type="match status" value="1"/>
</dbReference>
<dbReference type="Pfam" id="PF00842">
    <property type="entry name" value="Ala_racemase_C"/>
    <property type="match status" value="1"/>
</dbReference>
<dbReference type="Pfam" id="PF01168">
    <property type="entry name" value="Ala_racemase_N"/>
    <property type="match status" value="1"/>
</dbReference>
<dbReference type="PRINTS" id="PR00992">
    <property type="entry name" value="ALARACEMASE"/>
</dbReference>
<dbReference type="SMART" id="SM01005">
    <property type="entry name" value="Ala_racemase_C"/>
    <property type="match status" value="1"/>
</dbReference>
<dbReference type="SUPFAM" id="SSF50621">
    <property type="entry name" value="Alanine racemase C-terminal domain-like"/>
    <property type="match status" value="1"/>
</dbReference>
<dbReference type="SUPFAM" id="SSF51419">
    <property type="entry name" value="PLP-binding barrel"/>
    <property type="match status" value="1"/>
</dbReference>
<dbReference type="PROSITE" id="PS00395">
    <property type="entry name" value="ALANINE_RACEMASE"/>
    <property type="match status" value="1"/>
</dbReference>
<reference key="1">
    <citation type="journal article" date="2001" name="Genome Res.">
        <title>The complete genome sequence of the lactic acid bacterium Lactococcus lactis ssp. lactis IL1403.</title>
        <authorList>
            <person name="Bolotin A."/>
            <person name="Wincker P."/>
            <person name="Mauger S."/>
            <person name="Jaillon O."/>
            <person name="Malarme K."/>
            <person name="Weissenbach J."/>
            <person name="Ehrlich S.D."/>
            <person name="Sorokin A."/>
        </authorList>
    </citation>
    <scope>NUCLEOTIDE SEQUENCE [LARGE SCALE GENOMIC DNA]</scope>
    <source>
        <strain>IL1403</strain>
    </source>
</reference>
<feature type="chain" id="PRO_0000114526" description="Alanine racemase">
    <location>
        <begin position="1"/>
        <end position="367"/>
    </location>
</feature>
<feature type="active site" description="Proton acceptor; specific for D-alanine" evidence="1">
    <location>
        <position position="40"/>
    </location>
</feature>
<feature type="active site" description="Proton acceptor; specific for L-alanine" evidence="1">
    <location>
        <position position="263"/>
    </location>
</feature>
<feature type="binding site" evidence="1">
    <location>
        <position position="136"/>
    </location>
    <ligand>
        <name>substrate</name>
    </ligand>
</feature>
<feature type="binding site" evidence="1">
    <location>
        <position position="310"/>
    </location>
    <ligand>
        <name>substrate</name>
    </ligand>
</feature>
<feature type="modified residue" description="N6-(pyridoxal phosphate)lysine" evidence="1">
    <location>
        <position position="40"/>
    </location>
</feature>
<evidence type="ECO:0000255" key="1">
    <source>
        <dbReference type="HAMAP-Rule" id="MF_01201"/>
    </source>
</evidence>
<organism>
    <name type="scientific">Lactococcus lactis subsp. lactis (strain IL1403)</name>
    <name type="common">Streptococcus lactis</name>
    <dbReference type="NCBI Taxonomy" id="272623"/>
    <lineage>
        <taxon>Bacteria</taxon>
        <taxon>Bacillati</taxon>
        <taxon>Bacillota</taxon>
        <taxon>Bacilli</taxon>
        <taxon>Lactobacillales</taxon>
        <taxon>Streptococcaceae</taxon>
        <taxon>Lactococcus</taxon>
    </lineage>
</organism>
<keyword id="KW-0413">Isomerase</keyword>
<keyword id="KW-0663">Pyridoxal phosphate</keyword>
<keyword id="KW-1185">Reference proteome</keyword>
<accession>Q9CH94</accession>
<sequence>MKTSPHRNTSAIVDLKAIRNNIEKFKKHIHPNAEIWPAVKADAYGHGSVEVSKAVSDLVGGFCVSNLDEAIELRNHLVTKPILVLSGIVPEDVDIAAALNISLTAPSLEWLKLVVQEEAELSDLKIHIGVDSGMGRIGIRDVEEANQMIELADKYAINFEGIFTHFATADMADDTKFKDQQARFNKIMAGLSRKPKFVHSTNTAAALWHKEQVQAIERLGISMYGLNPSGKTLELPFEIEPALSLVSELTHIKKIAAGETVGYGATYETSEETWIGTVPIGYADGWTRQMQGFKVLVNGEFCEIVGRVCMDQMMIKLDKSYPLGTKVTLIGRDKTNEITTTDVADWRGTINYEVLCLLSDRIKRIYK</sequence>